<proteinExistence type="evidence at protein level"/>
<reference key="1">
    <citation type="journal article" date="1992" name="Biochim. Biophys. Acta">
        <title>Mammalian protein serine/threonine phosphatase 2C: cDNA cloning and comparative analysis of amino acid sequences.</title>
        <authorList>
            <person name="Mann D.J."/>
            <person name="Campbell D.G."/>
            <person name="McGowan C.H."/>
            <person name="Cohen P.T.W."/>
        </authorList>
    </citation>
    <scope>NUCLEOTIDE SEQUENCE [MRNA] (ISOFORM ALPHA-1)</scope>
</reference>
<reference key="2">
    <citation type="journal article" date="1998" name="EMBO J.">
        <title>Protein phosphatase 2Calpha inhibits the human stress-responsive p38 and JNK MAPK pathways.</title>
        <authorList>
            <person name="Takekawa M."/>
            <person name="Maeda T."/>
            <person name="Saito H."/>
        </authorList>
    </citation>
    <scope>NUCLEOTIDE SEQUENCE [MRNA] (ISOFORM ALPHA-2)</scope>
</reference>
<reference key="3">
    <citation type="journal article" date="2004" name="Nat. Genet.">
        <title>Complete sequencing and characterization of 21,243 full-length human cDNAs.</title>
        <authorList>
            <person name="Ota T."/>
            <person name="Suzuki Y."/>
            <person name="Nishikawa T."/>
            <person name="Otsuki T."/>
            <person name="Sugiyama T."/>
            <person name="Irie R."/>
            <person name="Wakamatsu A."/>
            <person name="Hayashi K."/>
            <person name="Sato H."/>
            <person name="Nagai K."/>
            <person name="Kimura K."/>
            <person name="Makita H."/>
            <person name="Sekine M."/>
            <person name="Obayashi M."/>
            <person name="Nishi T."/>
            <person name="Shibahara T."/>
            <person name="Tanaka T."/>
            <person name="Ishii S."/>
            <person name="Yamamoto J."/>
            <person name="Saito K."/>
            <person name="Kawai Y."/>
            <person name="Isono Y."/>
            <person name="Nakamura Y."/>
            <person name="Nagahari K."/>
            <person name="Murakami K."/>
            <person name="Yasuda T."/>
            <person name="Iwayanagi T."/>
            <person name="Wagatsuma M."/>
            <person name="Shiratori A."/>
            <person name="Sudo H."/>
            <person name="Hosoiri T."/>
            <person name="Kaku Y."/>
            <person name="Kodaira H."/>
            <person name="Kondo H."/>
            <person name="Sugawara M."/>
            <person name="Takahashi M."/>
            <person name="Kanda K."/>
            <person name="Yokoi T."/>
            <person name="Furuya T."/>
            <person name="Kikkawa E."/>
            <person name="Omura Y."/>
            <person name="Abe K."/>
            <person name="Kamihara K."/>
            <person name="Katsuta N."/>
            <person name="Sato K."/>
            <person name="Tanikawa M."/>
            <person name="Yamazaki M."/>
            <person name="Ninomiya K."/>
            <person name="Ishibashi T."/>
            <person name="Yamashita H."/>
            <person name="Murakawa K."/>
            <person name="Fujimori K."/>
            <person name="Tanai H."/>
            <person name="Kimata M."/>
            <person name="Watanabe M."/>
            <person name="Hiraoka S."/>
            <person name="Chiba Y."/>
            <person name="Ishida S."/>
            <person name="Ono Y."/>
            <person name="Takiguchi S."/>
            <person name="Watanabe S."/>
            <person name="Yosida M."/>
            <person name="Hotuta T."/>
            <person name="Kusano J."/>
            <person name="Kanehori K."/>
            <person name="Takahashi-Fujii A."/>
            <person name="Hara H."/>
            <person name="Tanase T.-O."/>
            <person name="Nomura Y."/>
            <person name="Togiya S."/>
            <person name="Komai F."/>
            <person name="Hara R."/>
            <person name="Takeuchi K."/>
            <person name="Arita M."/>
            <person name="Imose N."/>
            <person name="Musashino K."/>
            <person name="Yuuki H."/>
            <person name="Oshima A."/>
            <person name="Sasaki N."/>
            <person name="Aotsuka S."/>
            <person name="Yoshikawa Y."/>
            <person name="Matsunawa H."/>
            <person name="Ichihara T."/>
            <person name="Shiohata N."/>
            <person name="Sano S."/>
            <person name="Moriya S."/>
            <person name="Momiyama H."/>
            <person name="Satoh N."/>
            <person name="Takami S."/>
            <person name="Terashima Y."/>
            <person name="Suzuki O."/>
            <person name="Nakagawa S."/>
            <person name="Senoh A."/>
            <person name="Mizoguchi H."/>
            <person name="Goto Y."/>
            <person name="Shimizu F."/>
            <person name="Wakebe H."/>
            <person name="Hishigaki H."/>
            <person name="Watanabe T."/>
            <person name="Sugiyama A."/>
            <person name="Takemoto M."/>
            <person name="Kawakami B."/>
            <person name="Yamazaki M."/>
            <person name="Watanabe K."/>
            <person name="Kumagai A."/>
            <person name="Itakura S."/>
            <person name="Fukuzumi Y."/>
            <person name="Fujimori Y."/>
            <person name="Komiyama M."/>
            <person name="Tashiro H."/>
            <person name="Tanigami A."/>
            <person name="Fujiwara T."/>
            <person name="Ono T."/>
            <person name="Yamada K."/>
            <person name="Fujii Y."/>
            <person name="Ozaki K."/>
            <person name="Hirao M."/>
            <person name="Ohmori Y."/>
            <person name="Kawabata A."/>
            <person name="Hikiji T."/>
            <person name="Kobatake N."/>
            <person name="Inagaki H."/>
            <person name="Ikema Y."/>
            <person name="Okamoto S."/>
            <person name="Okitani R."/>
            <person name="Kawakami T."/>
            <person name="Noguchi S."/>
            <person name="Itoh T."/>
            <person name="Shigeta K."/>
            <person name="Senba T."/>
            <person name="Matsumura K."/>
            <person name="Nakajima Y."/>
            <person name="Mizuno T."/>
            <person name="Morinaga M."/>
            <person name="Sasaki M."/>
            <person name="Togashi T."/>
            <person name="Oyama M."/>
            <person name="Hata H."/>
            <person name="Watanabe M."/>
            <person name="Komatsu T."/>
            <person name="Mizushima-Sugano J."/>
            <person name="Satoh T."/>
            <person name="Shirai Y."/>
            <person name="Takahashi Y."/>
            <person name="Nakagawa K."/>
            <person name="Okumura K."/>
            <person name="Nagase T."/>
            <person name="Nomura N."/>
            <person name="Kikuchi H."/>
            <person name="Masuho Y."/>
            <person name="Yamashita R."/>
            <person name="Nakai K."/>
            <person name="Yada T."/>
            <person name="Nakamura Y."/>
            <person name="Ohara O."/>
            <person name="Isogai T."/>
            <person name="Sugano S."/>
        </authorList>
    </citation>
    <scope>NUCLEOTIDE SEQUENCE [LARGE SCALE MRNA] (ISOFORM 3)</scope>
    <source>
        <tissue>Testis</tissue>
    </source>
</reference>
<reference key="4">
    <citation type="journal article" date="2008" name="Nat. Methods">
        <title>Human protein factory for converting the transcriptome into an in vitro-expressed proteome.</title>
        <authorList>
            <person name="Goshima N."/>
            <person name="Kawamura Y."/>
            <person name="Fukumoto A."/>
            <person name="Miura A."/>
            <person name="Honma R."/>
            <person name="Satoh R."/>
            <person name="Wakamatsu A."/>
            <person name="Yamamoto J."/>
            <person name="Kimura K."/>
            <person name="Nishikawa T."/>
            <person name="Andoh T."/>
            <person name="Iida Y."/>
            <person name="Ishikawa K."/>
            <person name="Ito E."/>
            <person name="Kagawa N."/>
            <person name="Kaminaga C."/>
            <person name="Kanehori K."/>
            <person name="Kawakami B."/>
            <person name="Kenmochi K."/>
            <person name="Kimura R."/>
            <person name="Kobayashi M."/>
            <person name="Kuroita T."/>
            <person name="Kuwayama H."/>
            <person name="Maruyama Y."/>
            <person name="Matsuo K."/>
            <person name="Minami K."/>
            <person name="Mitsubori M."/>
            <person name="Mori M."/>
            <person name="Morishita R."/>
            <person name="Murase A."/>
            <person name="Nishikawa A."/>
            <person name="Nishikawa S."/>
            <person name="Okamoto T."/>
            <person name="Sakagami N."/>
            <person name="Sakamoto Y."/>
            <person name="Sasaki Y."/>
            <person name="Seki T."/>
            <person name="Sono S."/>
            <person name="Sugiyama A."/>
            <person name="Sumiya T."/>
            <person name="Takayama T."/>
            <person name="Takayama Y."/>
            <person name="Takeda H."/>
            <person name="Togashi T."/>
            <person name="Yahata K."/>
            <person name="Yamada H."/>
            <person name="Yanagisawa Y."/>
            <person name="Endo Y."/>
            <person name="Imamoto F."/>
            <person name="Kisu Y."/>
            <person name="Tanaka S."/>
            <person name="Isogai T."/>
            <person name="Imai J."/>
            <person name="Watanabe S."/>
            <person name="Nomura N."/>
        </authorList>
    </citation>
    <scope>NUCLEOTIDE SEQUENCE [LARGE SCALE MRNA] (ISOFORM ALPHA-1)</scope>
</reference>
<reference key="5">
    <citation type="journal article" date="2003" name="Nature">
        <title>The DNA sequence and analysis of human chromosome 14.</title>
        <authorList>
            <person name="Heilig R."/>
            <person name="Eckenberg R."/>
            <person name="Petit J.-L."/>
            <person name="Fonknechten N."/>
            <person name="Da Silva C."/>
            <person name="Cattolico L."/>
            <person name="Levy M."/>
            <person name="Barbe V."/>
            <person name="De Berardinis V."/>
            <person name="Ureta-Vidal A."/>
            <person name="Pelletier E."/>
            <person name="Vico V."/>
            <person name="Anthouard V."/>
            <person name="Rowen L."/>
            <person name="Madan A."/>
            <person name="Qin S."/>
            <person name="Sun H."/>
            <person name="Du H."/>
            <person name="Pepin K."/>
            <person name="Artiguenave F."/>
            <person name="Robert C."/>
            <person name="Cruaud C."/>
            <person name="Bruels T."/>
            <person name="Jaillon O."/>
            <person name="Friedlander L."/>
            <person name="Samson G."/>
            <person name="Brottier P."/>
            <person name="Cure S."/>
            <person name="Segurens B."/>
            <person name="Aniere F."/>
            <person name="Samain S."/>
            <person name="Crespeau H."/>
            <person name="Abbasi N."/>
            <person name="Aiach N."/>
            <person name="Boscus D."/>
            <person name="Dickhoff R."/>
            <person name="Dors M."/>
            <person name="Dubois I."/>
            <person name="Friedman C."/>
            <person name="Gouyvenoux M."/>
            <person name="James R."/>
            <person name="Madan A."/>
            <person name="Mairey-Estrada B."/>
            <person name="Mangenot S."/>
            <person name="Martins N."/>
            <person name="Menard M."/>
            <person name="Oztas S."/>
            <person name="Ratcliffe A."/>
            <person name="Shaffer T."/>
            <person name="Trask B."/>
            <person name="Vacherie B."/>
            <person name="Bellemere C."/>
            <person name="Belser C."/>
            <person name="Besnard-Gonnet M."/>
            <person name="Bartol-Mavel D."/>
            <person name="Boutard M."/>
            <person name="Briez-Silla S."/>
            <person name="Combette S."/>
            <person name="Dufosse-Laurent V."/>
            <person name="Ferron C."/>
            <person name="Lechaplais C."/>
            <person name="Louesse C."/>
            <person name="Muselet D."/>
            <person name="Magdelenat G."/>
            <person name="Pateau E."/>
            <person name="Petit E."/>
            <person name="Sirvain-Trukniewicz P."/>
            <person name="Trybou A."/>
            <person name="Vega-Czarny N."/>
            <person name="Bataille E."/>
            <person name="Bluet E."/>
            <person name="Bordelais I."/>
            <person name="Dubois M."/>
            <person name="Dumont C."/>
            <person name="Guerin T."/>
            <person name="Haffray S."/>
            <person name="Hammadi R."/>
            <person name="Muanga J."/>
            <person name="Pellouin V."/>
            <person name="Robert D."/>
            <person name="Wunderle E."/>
            <person name="Gauguet G."/>
            <person name="Roy A."/>
            <person name="Sainte-Marthe L."/>
            <person name="Verdier J."/>
            <person name="Verdier-Discala C."/>
            <person name="Hillier L.W."/>
            <person name="Fulton L."/>
            <person name="McPherson J."/>
            <person name="Matsuda F."/>
            <person name="Wilson R."/>
            <person name="Scarpelli C."/>
            <person name="Gyapay G."/>
            <person name="Wincker P."/>
            <person name="Saurin W."/>
            <person name="Quetier F."/>
            <person name="Waterston R."/>
            <person name="Hood L."/>
            <person name="Weissenbach J."/>
        </authorList>
    </citation>
    <scope>NUCLEOTIDE SEQUENCE [LARGE SCALE GENOMIC DNA]</scope>
</reference>
<reference key="6">
    <citation type="submission" date="2005-07" db="EMBL/GenBank/DDBJ databases">
        <authorList>
            <person name="Mural R.J."/>
            <person name="Istrail S."/>
            <person name="Sutton G.G."/>
            <person name="Florea L."/>
            <person name="Halpern A.L."/>
            <person name="Mobarry C.M."/>
            <person name="Lippert R."/>
            <person name="Walenz B."/>
            <person name="Shatkay H."/>
            <person name="Dew I."/>
            <person name="Miller J.R."/>
            <person name="Flanigan M.J."/>
            <person name="Edwards N.J."/>
            <person name="Bolanos R."/>
            <person name="Fasulo D."/>
            <person name="Halldorsson B.V."/>
            <person name="Hannenhalli S."/>
            <person name="Turner R."/>
            <person name="Yooseph S."/>
            <person name="Lu F."/>
            <person name="Nusskern D.R."/>
            <person name="Shue B.C."/>
            <person name="Zheng X.H."/>
            <person name="Zhong F."/>
            <person name="Delcher A.L."/>
            <person name="Huson D.H."/>
            <person name="Kravitz S.A."/>
            <person name="Mouchard L."/>
            <person name="Reinert K."/>
            <person name="Remington K.A."/>
            <person name="Clark A.G."/>
            <person name="Waterman M.S."/>
            <person name="Eichler E.E."/>
            <person name="Adams M.D."/>
            <person name="Hunkapiller M.W."/>
            <person name="Myers E.W."/>
            <person name="Venter J.C."/>
        </authorList>
    </citation>
    <scope>NUCLEOTIDE SEQUENCE [LARGE SCALE GENOMIC DNA]</scope>
</reference>
<reference key="7">
    <citation type="journal article" date="2004" name="Genome Res.">
        <title>The status, quality, and expansion of the NIH full-length cDNA project: the Mammalian Gene Collection (MGC).</title>
        <authorList>
            <consortium name="The MGC Project Team"/>
        </authorList>
    </citation>
    <scope>NUCLEOTIDE SEQUENCE [LARGE SCALE MRNA] (ISOFORM ALPHA-1)</scope>
    <source>
        <tissue>Colon</tissue>
        <tissue>Lung</tissue>
    </source>
</reference>
<reference key="8">
    <citation type="journal article" date="2006" name="Cell">
        <title>PPM1A functions as a Smad phosphatase to terminate TGFbeta signaling.</title>
        <authorList>
            <person name="Lin X."/>
            <person name="Duan X."/>
            <person name="Liang Y.Y."/>
            <person name="Su Y."/>
            <person name="Wrighton K.H."/>
            <person name="Long J."/>
            <person name="Hu M."/>
            <person name="Davis C.M."/>
            <person name="Wang J."/>
            <person name="Brunicardi F.C."/>
            <person name="Shi Y."/>
            <person name="Chen Y.G."/>
            <person name="Meng A."/>
            <person name="Feng X.H."/>
        </authorList>
    </citation>
    <scope>INTERACTION WITH SMAD2 AND SMAD3</scope>
    <scope>FUNCTION</scope>
    <scope>SUBCELLULAR LOCATION</scope>
    <scope>MUTAGENESIS OF ASP-239</scope>
</reference>
<reference key="9">
    <citation type="journal article" date="2009" name="Cell. Signal.">
        <title>PPM1A and PPM1B act as IKKbeta phosphatases to terminate TNFalpha-induced IKKbeta-NF-kappaB activation.</title>
        <authorList>
            <person name="Sun W."/>
            <person name="Yu Y."/>
            <person name="Dotti G."/>
            <person name="Shen T."/>
            <person name="Tan X."/>
            <person name="Savoldo B."/>
            <person name="Pass A.K."/>
            <person name="Chu M."/>
            <person name="Zhang D."/>
            <person name="Lu X."/>
            <person name="Fu S."/>
            <person name="Lin X."/>
            <person name="Yang J."/>
        </authorList>
    </citation>
    <scope>FUNCTION</scope>
    <scope>INTERACTION WITH IKBKB</scope>
</reference>
<reference key="10">
    <citation type="journal article" date="2009" name="Sci. Signal.">
        <title>Quantitative phosphoproteomic analysis of T cell receptor signaling reveals system-wide modulation of protein-protein interactions.</title>
        <authorList>
            <person name="Mayya V."/>
            <person name="Lundgren D.H."/>
            <person name="Hwang S.-I."/>
            <person name="Rezaul K."/>
            <person name="Wu L."/>
            <person name="Eng J.K."/>
            <person name="Rodionov V."/>
            <person name="Han D.K."/>
        </authorList>
    </citation>
    <scope>PHOSPHORYLATION [LARGE SCALE ANALYSIS] AT SER-375</scope>
    <scope>IDENTIFICATION BY MASS SPECTROMETRY [LARGE SCALE ANALYSIS]</scope>
    <source>
        <tissue>Leukemic T-cell</tissue>
    </source>
</reference>
<reference key="11">
    <citation type="journal article" date="2010" name="Proteomics">
        <title>Strategy for comprehensive identification of human N-myristoylated proteins using an insect cell-free protein synthesis system.</title>
        <authorList>
            <person name="Suzuki T."/>
            <person name="Moriya K."/>
            <person name="Nagatoshi K."/>
            <person name="Ota Y."/>
            <person name="Ezure T."/>
            <person name="Ando E."/>
            <person name="Tsunasawa S."/>
            <person name="Utsumi T."/>
        </authorList>
    </citation>
    <scope>MYRISTOYLATION AT GLY-2</scope>
</reference>
<reference key="12">
    <citation type="journal article" date="2011" name="BMC Syst. Biol.">
        <title>Initial characterization of the human central proteome.</title>
        <authorList>
            <person name="Burkard T.R."/>
            <person name="Planyavsky M."/>
            <person name="Kaupe I."/>
            <person name="Breitwieser F.P."/>
            <person name="Buerckstuemmer T."/>
            <person name="Bennett K.L."/>
            <person name="Superti-Furga G."/>
            <person name="Colinge J."/>
        </authorList>
    </citation>
    <scope>IDENTIFICATION BY MASS SPECTROMETRY [LARGE SCALE ANALYSIS]</scope>
</reference>
<reference key="13">
    <citation type="journal article" date="2012" name="Cell. Signal.">
        <title>Protein phosphatase 5 modulates SMAD3 function in the transforming growth factor-beta pathway.</title>
        <authorList>
            <person name="Bruce D.L."/>
            <person name="Macartney T."/>
            <person name="Yong W."/>
            <person name="Shou W."/>
            <person name="Sapkota G.P."/>
        </authorList>
    </citation>
    <scope>SUBCELLULAR LOCATION</scope>
</reference>
<reference key="14">
    <citation type="journal article" date="2014" name="J. Proteomics">
        <title>An enzyme assisted RP-RPLC approach for in-depth analysis of human liver phosphoproteome.</title>
        <authorList>
            <person name="Bian Y."/>
            <person name="Song C."/>
            <person name="Cheng K."/>
            <person name="Dong M."/>
            <person name="Wang F."/>
            <person name="Huang J."/>
            <person name="Sun D."/>
            <person name="Wang L."/>
            <person name="Ye M."/>
            <person name="Zou H."/>
        </authorList>
    </citation>
    <scope>IDENTIFICATION BY MASS SPECTROMETRY [LARGE SCALE ANALYSIS]</scope>
    <source>
        <tissue>Liver</tissue>
    </source>
</reference>
<reference key="15">
    <citation type="journal article" date="2014" name="Nat. Commun.">
        <title>Global profiling of co- and post-translationally N-myristoylated proteomes in human cells.</title>
        <authorList>
            <person name="Thinon E."/>
            <person name="Serwa R.A."/>
            <person name="Broncel M."/>
            <person name="Brannigan J.A."/>
            <person name="Brassat U."/>
            <person name="Wright M.H."/>
            <person name="Heal W.P."/>
            <person name="Wilkinson A.J."/>
            <person name="Mann D.J."/>
            <person name="Tate E.W."/>
        </authorList>
    </citation>
    <scope>MYRISTOYLATION AT GLY-2</scope>
    <scope>CLEAVAGE OF INITIATOR METHIONINE</scope>
    <scope>IDENTIFICATION BY MASS SPECTROMETRY</scope>
</reference>
<reference key="16">
    <citation type="journal article" date="2018" name="Biochim. Biophys. Acta">
        <title>The mitochondrial phosphatase PPTC7 orchestrates mitochondrial metabolism regulating coenzyme Q10 biosynthesis.</title>
        <authorList>
            <person name="Gonzalez-Mariscal I."/>
            <person name="Martin-Montalvo A."/>
            <person name="Vazquez-Fonseca L."/>
            <person name="Pomares-Viciana T."/>
            <person name="Sanchez-Cuesta A."/>
            <person name="Fernandez-Ayala D.J."/>
            <person name="Navas P."/>
            <person name="Santos-Ocana C."/>
        </authorList>
    </citation>
    <scope>CATALYTIC ACTIVITY</scope>
    <scope>COFACTOR</scope>
    <scope>METAL-BINDING SITES</scope>
</reference>
<reference key="17">
    <citation type="journal article" date="1996" name="EMBO J.">
        <title>Crystal structure of the protein serine/threonine phosphatase 2C at 2.0-A resolution.</title>
        <authorList>
            <person name="Das A.K."/>
            <person name="Helps N.R."/>
            <person name="Cohen P.T.W."/>
            <person name="Barford D."/>
        </authorList>
    </citation>
    <scope>X-RAY CRYSTALLOGRAPHY (2.6 ANGSTROMS)</scope>
    <scope>COFACTOR</scope>
</reference>
<evidence type="ECO:0000250" key="1"/>
<evidence type="ECO:0000250" key="2">
    <source>
        <dbReference type="UniProtKB" id="P49443"/>
    </source>
</evidence>
<evidence type="ECO:0000255" key="3">
    <source>
        <dbReference type="PROSITE-ProRule" id="PRU01082"/>
    </source>
</evidence>
<evidence type="ECO:0000269" key="4">
    <source>
    </source>
</evidence>
<evidence type="ECO:0000269" key="5">
    <source>
    </source>
</evidence>
<evidence type="ECO:0000269" key="6">
    <source>
    </source>
</evidence>
<evidence type="ECO:0000269" key="7">
    <source>
    </source>
</evidence>
<evidence type="ECO:0000269" key="8">
    <source>
    </source>
</evidence>
<evidence type="ECO:0000269" key="9">
    <source>
    </source>
</evidence>
<evidence type="ECO:0000269" key="10">
    <source>
    </source>
</evidence>
<evidence type="ECO:0000303" key="11">
    <source>
    </source>
</evidence>
<evidence type="ECO:0000303" key="12">
    <source>
    </source>
</evidence>
<evidence type="ECO:0000305" key="13"/>
<evidence type="ECO:0007744" key="14">
    <source>
        <dbReference type="PDB" id="1A6Q"/>
    </source>
</evidence>
<evidence type="ECO:0007744" key="15">
    <source>
    </source>
</evidence>
<evidence type="ECO:0007829" key="16">
    <source>
        <dbReference type="PDB" id="4RA2"/>
    </source>
</evidence>
<evidence type="ECO:0007829" key="17">
    <source>
        <dbReference type="PDB" id="4RAG"/>
    </source>
</evidence>
<gene>
    <name type="primary">PPM1A</name>
    <name type="synonym">PPPM1A</name>
</gene>
<organism>
    <name type="scientific">Homo sapiens</name>
    <name type="common">Human</name>
    <dbReference type="NCBI Taxonomy" id="9606"/>
    <lineage>
        <taxon>Eukaryota</taxon>
        <taxon>Metazoa</taxon>
        <taxon>Chordata</taxon>
        <taxon>Craniata</taxon>
        <taxon>Vertebrata</taxon>
        <taxon>Euteleostomi</taxon>
        <taxon>Mammalia</taxon>
        <taxon>Eutheria</taxon>
        <taxon>Euarchontoglires</taxon>
        <taxon>Primates</taxon>
        <taxon>Haplorrhini</taxon>
        <taxon>Catarrhini</taxon>
        <taxon>Hominidae</taxon>
        <taxon>Homo</taxon>
    </lineage>
</organism>
<name>PPM1A_HUMAN</name>
<comment type="function">
    <text evidence="4 5">Enzyme with a broad specificity. Negatively regulates TGF-beta signaling through dephosphorylating SMAD2 and SMAD3, resulting in their dissociation from SMAD4, nuclear export of the SMADs and termination of the TGF-beta-mediated signaling. Dephosphorylates PRKAA1 and PRKAA2. Plays an important role in the termination of TNF-alpha-mediated NF-kappa-B activation through dephosphorylating and inactivating IKBKB/IKKB.</text>
</comment>
<comment type="catalytic activity">
    <reaction evidence="3">
        <text>O-phospho-L-seryl-[protein] + H2O = L-seryl-[protein] + phosphate</text>
        <dbReference type="Rhea" id="RHEA:20629"/>
        <dbReference type="Rhea" id="RHEA-COMP:9863"/>
        <dbReference type="Rhea" id="RHEA-COMP:11604"/>
        <dbReference type="ChEBI" id="CHEBI:15377"/>
        <dbReference type="ChEBI" id="CHEBI:29999"/>
        <dbReference type="ChEBI" id="CHEBI:43474"/>
        <dbReference type="ChEBI" id="CHEBI:83421"/>
        <dbReference type="EC" id="3.1.3.16"/>
    </reaction>
</comment>
<comment type="catalytic activity">
    <reaction evidence="9">
        <text>O-phospho-L-threonyl-[protein] + H2O = L-threonyl-[protein] + phosphate</text>
        <dbReference type="Rhea" id="RHEA:47004"/>
        <dbReference type="Rhea" id="RHEA-COMP:11060"/>
        <dbReference type="Rhea" id="RHEA-COMP:11605"/>
        <dbReference type="ChEBI" id="CHEBI:15377"/>
        <dbReference type="ChEBI" id="CHEBI:30013"/>
        <dbReference type="ChEBI" id="CHEBI:43474"/>
        <dbReference type="ChEBI" id="CHEBI:61977"/>
        <dbReference type="EC" id="3.1.3.16"/>
    </reaction>
</comment>
<comment type="cofactor">
    <cofactor evidence="9">
        <name>Mg(2+)</name>
        <dbReference type="ChEBI" id="CHEBI:18420"/>
    </cofactor>
    <cofactor evidence="9">
        <name>Mn(2+)</name>
        <dbReference type="ChEBI" id="CHEBI:29035"/>
    </cofactor>
    <text evidence="3">Binds 2 magnesium or manganese ions per subunit.</text>
</comment>
<comment type="subunit">
    <text evidence="4 5">Monomer. Interacts with SMAD2; the interaction dephosphorylates SMAD2 in its C-terminal SXS motif resulting in disruption of the SMAD2/SMAD4 complex, SMAD2 nuclear export and termination of the TGF-beta-mediated signaling. Interacts with SMAD2; the interaction dephosphorylates SMAD2 in its C-terminal SXS motif resulting in disruption of the SMAD2/SMAD4 complex, SMAD2 nuclear export and termination of the TGF-beta-mediated signaling. Interacts with the phosphorylated form of IKBKB/IKKB.</text>
</comment>
<comment type="interaction">
    <interactant intactId="EBI-989143">
        <id>P35813</id>
    </interactant>
    <interactant intactId="EBI-743313">
        <id>P49407</id>
        <label>ARRB1</label>
    </interactant>
    <organismsDiffer>false</organismsDiffer>
    <experiments>4</experiments>
</comment>
<comment type="interaction">
    <interactant intactId="EBI-989143">
        <id>P35813</id>
    </interactant>
    <interactant intactId="EBI-714559">
        <id>P32121</id>
        <label>ARRB2</label>
    </interactant>
    <organismsDiffer>false</organismsDiffer>
    <experiments>3</experiments>
</comment>
<comment type="interaction">
    <interactant intactId="EBI-989143">
        <id>P35813</id>
    </interactant>
    <interactant intactId="EBI-710484">
        <id>O15169</id>
        <label>AXIN1</label>
    </interactant>
    <organismsDiffer>false</organismsDiffer>
    <experiments>2</experiments>
</comment>
<comment type="interaction">
    <interactant intactId="EBI-989143">
        <id>P35813</id>
    </interactant>
    <interactant intactId="EBI-25586026">
        <id>Q49MI3</id>
        <label>CERKL</label>
    </interactant>
    <organismsDiffer>false</organismsDiffer>
    <experiments>3</experiments>
</comment>
<comment type="interaction">
    <interactant intactId="EBI-989143">
        <id>P35813</id>
    </interactant>
    <interactant intactId="EBI-297353">
        <id>P00533</id>
        <label>EGFR</label>
    </interactant>
    <organismsDiffer>false</organismsDiffer>
    <experiments>2</experiments>
</comment>
<comment type="interaction">
    <interactant intactId="EBI-989143">
        <id>P35813</id>
    </interactant>
    <interactant intactId="EBI-475981">
        <id>P08069</id>
        <label>IGF1R</label>
    </interactant>
    <organismsDiffer>false</organismsDiffer>
    <experiments>2</experiments>
</comment>
<comment type="interaction">
    <interactant intactId="EBI-989143">
        <id>P35813</id>
    </interactant>
    <interactant intactId="EBI-959949">
        <id>P28482</id>
        <label>MAPK1</label>
    </interactant>
    <organismsDiffer>false</organismsDiffer>
    <experiments>19</experiments>
</comment>
<comment type="interaction">
    <interactant intactId="EBI-989143">
        <id>P35813</id>
    </interactant>
    <interactant intactId="EBI-73946">
        <id>Q16539</id>
        <label>MAPK14</label>
    </interactant>
    <organismsDiffer>false</organismsDiffer>
    <experiments>2</experiments>
</comment>
<comment type="interaction">
    <interactant intactId="EBI-989143">
        <id>P35813</id>
    </interactant>
    <interactant intactId="EBI-21866379">
        <id>Q9GZN4</id>
        <label>PRSS22</label>
    </interactant>
    <organismsDiffer>false</organismsDiffer>
    <experiments>3</experiments>
</comment>
<comment type="interaction">
    <interactant intactId="EBI-989143">
        <id>P35813</id>
    </interactant>
    <interactant intactId="EBI-992681">
        <id>Q9H6Z4</id>
        <label>RANBP3</label>
    </interactant>
    <organismsDiffer>false</organismsDiffer>
    <experiments>4</experiments>
</comment>
<comment type="interaction">
    <interactant intactId="EBI-989143">
        <id>P35813</id>
    </interactant>
    <interactant intactId="EBI-1040141">
        <id>Q15796</id>
        <label>SMAD2</label>
    </interactant>
    <organismsDiffer>false</organismsDiffer>
    <experiments>2</experiments>
</comment>
<comment type="subcellular location">
    <subcellularLocation>
        <location evidence="4">Nucleus</location>
    </subcellularLocation>
    <subcellularLocation>
        <location evidence="7">Cytoplasm</location>
        <location evidence="7">Cytosol</location>
    </subcellularLocation>
    <subcellularLocation>
        <location evidence="6 8">Membrane</location>
        <topology evidence="6 8">Lipid-anchor</topology>
    </subcellularLocation>
    <text evidence="2">Weakly associates at the membrane and N-myristoylation mediates the membrane localization.</text>
</comment>
<comment type="alternative products">
    <event type="alternative splicing"/>
    <isoform>
        <id>P35813-1</id>
        <name>Alpha-1</name>
        <sequence type="displayed"/>
    </isoform>
    <isoform>
        <id>P35813-2</id>
        <name>Alpha-2</name>
        <sequence type="described" ref="VSP_005085 VSP_005086"/>
    </isoform>
    <isoform>
        <id>P35813-3</id>
        <name>3</name>
        <sequence type="described" ref="VSP_045687"/>
    </isoform>
</comment>
<comment type="PTM">
    <text evidence="1">N-myristoylation is essential for the recognition of its substrates for dephosphorylation.</text>
</comment>
<comment type="similarity">
    <text evidence="13">Belongs to the PP2C family.</text>
</comment>
<dbReference type="EC" id="3.1.3.16" evidence="3 9"/>
<dbReference type="EMBL" id="S87759">
    <property type="protein sequence ID" value="AAB21784.1"/>
    <property type="molecule type" value="mRNA"/>
</dbReference>
<dbReference type="EMBL" id="AF070670">
    <property type="protein sequence ID" value="AAC28354.1"/>
    <property type="molecule type" value="mRNA"/>
</dbReference>
<dbReference type="EMBL" id="AK097843">
    <property type="status" value="NOT_ANNOTATED_CDS"/>
    <property type="molecule type" value="mRNA"/>
</dbReference>
<dbReference type="EMBL" id="AB451247">
    <property type="protein sequence ID" value="BAG70061.1"/>
    <property type="molecule type" value="mRNA"/>
</dbReference>
<dbReference type="EMBL" id="AL132778">
    <property type="status" value="NOT_ANNOTATED_CDS"/>
    <property type="molecule type" value="Genomic_DNA"/>
</dbReference>
<dbReference type="EMBL" id="AL157756">
    <property type="status" value="NOT_ANNOTATED_CDS"/>
    <property type="molecule type" value="Genomic_DNA"/>
</dbReference>
<dbReference type="EMBL" id="CH471061">
    <property type="protein sequence ID" value="EAW80774.1"/>
    <property type="molecule type" value="Genomic_DNA"/>
</dbReference>
<dbReference type="EMBL" id="BC026691">
    <property type="protein sequence ID" value="AAH26691.1"/>
    <property type="molecule type" value="mRNA"/>
</dbReference>
<dbReference type="EMBL" id="BC063243">
    <property type="protein sequence ID" value="AAH63243.1"/>
    <property type="molecule type" value="mRNA"/>
</dbReference>
<dbReference type="CCDS" id="CCDS45120.1">
    <molecule id="P35813-3"/>
</dbReference>
<dbReference type="CCDS" id="CCDS9744.1">
    <molecule id="P35813-1"/>
</dbReference>
<dbReference type="CCDS" id="CCDS9745.1">
    <molecule id="P35813-2"/>
</dbReference>
<dbReference type="PIR" id="S22423">
    <property type="entry name" value="S22423"/>
</dbReference>
<dbReference type="RefSeq" id="NP_066283.1">
    <molecule id="P35813-1"/>
    <property type="nucleotide sequence ID" value="NM_021003.5"/>
</dbReference>
<dbReference type="RefSeq" id="NP_808820.1">
    <molecule id="P35813-2"/>
    <property type="nucleotide sequence ID" value="NM_177951.3"/>
</dbReference>
<dbReference type="RefSeq" id="NP_808821.2">
    <molecule id="P35813-3"/>
    <property type="nucleotide sequence ID" value="NM_177952.3"/>
</dbReference>
<dbReference type="RefSeq" id="XP_005267836.1">
    <property type="nucleotide sequence ID" value="XM_005267779.1"/>
</dbReference>
<dbReference type="RefSeq" id="XP_005267838.1">
    <property type="nucleotide sequence ID" value="XM_005267781.1"/>
</dbReference>
<dbReference type="RefSeq" id="XP_011535180.1">
    <property type="nucleotide sequence ID" value="XM_011536878.1"/>
</dbReference>
<dbReference type="RefSeq" id="XP_011535181.1">
    <property type="nucleotide sequence ID" value="XM_011536879.2"/>
</dbReference>
<dbReference type="RefSeq" id="XP_011535182.1">
    <property type="nucleotide sequence ID" value="XM_011536880.2"/>
</dbReference>
<dbReference type="RefSeq" id="XP_011535183.1">
    <molecule id="P35813-1"/>
    <property type="nucleotide sequence ID" value="XM_011536881.4"/>
</dbReference>
<dbReference type="RefSeq" id="XP_011535184.1">
    <property type="nucleotide sequence ID" value="XM_011536882.2"/>
</dbReference>
<dbReference type="RefSeq" id="XP_011535185.1">
    <molecule id="P35813-1"/>
    <property type="nucleotide sequence ID" value="XM_011536883.2"/>
</dbReference>
<dbReference type="RefSeq" id="XP_011535186.1">
    <property type="nucleotide sequence ID" value="XM_011536884.1"/>
</dbReference>
<dbReference type="RefSeq" id="XP_016876873.1">
    <property type="nucleotide sequence ID" value="XM_017021384.1"/>
</dbReference>
<dbReference type="RefSeq" id="XP_016876874.1">
    <property type="nucleotide sequence ID" value="XM_017021385.1"/>
</dbReference>
<dbReference type="RefSeq" id="XP_016876875.1">
    <property type="nucleotide sequence ID" value="XM_017021386.1"/>
</dbReference>
<dbReference type="RefSeq" id="XP_016876876.1">
    <property type="nucleotide sequence ID" value="XM_017021387.1"/>
</dbReference>
<dbReference type="RefSeq" id="XP_024305405.1">
    <molecule id="P35813-1"/>
    <property type="nucleotide sequence ID" value="XM_024449637.2"/>
</dbReference>
<dbReference type="RefSeq" id="XP_047287459.1">
    <molecule id="P35813-1"/>
    <property type="nucleotide sequence ID" value="XM_047431503.1"/>
</dbReference>
<dbReference type="RefSeq" id="XP_047287460.1">
    <molecule id="P35813-1"/>
    <property type="nucleotide sequence ID" value="XM_047431504.1"/>
</dbReference>
<dbReference type="RefSeq" id="XP_047287461.1">
    <molecule id="P35813-1"/>
    <property type="nucleotide sequence ID" value="XM_047431505.1"/>
</dbReference>
<dbReference type="RefSeq" id="XP_047287462.1">
    <molecule id="P35813-1"/>
    <property type="nucleotide sequence ID" value="XM_047431506.1"/>
</dbReference>
<dbReference type="RefSeq" id="XP_047287463.1">
    <molecule id="P35813-1"/>
    <property type="nucleotide sequence ID" value="XM_047431507.1"/>
</dbReference>
<dbReference type="RefSeq" id="XP_047287464.1">
    <molecule id="P35813-1"/>
    <property type="nucleotide sequence ID" value="XM_047431508.1"/>
</dbReference>
<dbReference type="RefSeq" id="XP_047287465.1">
    <molecule id="P35813-1"/>
    <property type="nucleotide sequence ID" value="XM_047431509.1"/>
</dbReference>
<dbReference type="RefSeq" id="XP_047287466.1">
    <molecule id="P35813-1"/>
    <property type="nucleotide sequence ID" value="XM_047431510.1"/>
</dbReference>
<dbReference type="RefSeq" id="XP_047287467.1">
    <molecule id="P35813-1"/>
    <property type="nucleotide sequence ID" value="XM_047431511.1"/>
</dbReference>
<dbReference type="RefSeq" id="XP_047287468.1">
    <molecule id="P35813-1"/>
    <property type="nucleotide sequence ID" value="XM_047431512.1"/>
</dbReference>
<dbReference type="RefSeq" id="XP_047287469.1">
    <molecule id="P35813-1"/>
    <property type="nucleotide sequence ID" value="XM_047431513.1"/>
</dbReference>
<dbReference type="RefSeq" id="XP_047287470.1">
    <molecule id="P35813-1"/>
    <property type="nucleotide sequence ID" value="XM_047431514.1"/>
</dbReference>
<dbReference type="RefSeq" id="XP_047287471.1">
    <molecule id="P35813-1"/>
    <property type="nucleotide sequence ID" value="XM_047431515.1"/>
</dbReference>
<dbReference type="RefSeq" id="XP_047287472.1">
    <molecule id="P35813-1"/>
    <property type="nucleotide sequence ID" value="XM_047431516.1"/>
</dbReference>
<dbReference type="RefSeq" id="XP_054232234.1">
    <molecule id="P35813-1"/>
    <property type="nucleotide sequence ID" value="XM_054376259.1"/>
</dbReference>
<dbReference type="RefSeq" id="XP_054232235.1">
    <molecule id="P35813-1"/>
    <property type="nucleotide sequence ID" value="XM_054376260.1"/>
</dbReference>
<dbReference type="RefSeq" id="XP_054232236.1">
    <molecule id="P35813-1"/>
    <property type="nucleotide sequence ID" value="XM_054376261.1"/>
</dbReference>
<dbReference type="RefSeq" id="XP_054232237.1">
    <molecule id="P35813-1"/>
    <property type="nucleotide sequence ID" value="XM_054376262.1"/>
</dbReference>
<dbReference type="RefSeq" id="XP_054232238.1">
    <molecule id="P35813-1"/>
    <property type="nucleotide sequence ID" value="XM_054376263.1"/>
</dbReference>
<dbReference type="RefSeq" id="XP_054232239.1">
    <molecule id="P35813-1"/>
    <property type="nucleotide sequence ID" value="XM_054376264.1"/>
</dbReference>
<dbReference type="RefSeq" id="XP_054232240.1">
    <molecule id="P35813-1"/>
    <property type="nucleotide sequence ID" value="XM_054376265.1"/>
</dbReference>
<dbReference type="RefSeq" id="XP_054232241.1">
    <molecule id="P35813-1"/>
    <property type="nucleotide sequence ID" value="XM_054376266.1"/>
</dbReference>
<dbReference type="RefSeq" id="XP_054232242.1">
    <molecule id="P35813-1"/>
    <property type="nucleotide sequence ID" value="XM_054376267.1"/>
</dbReference>
<dbReference type="RefSeq" id="XP_054232243.1">
    <molecule id="P35813-1"/>
    <property type="nucleotide sequence ID" value="XM_054376268.1"/>
</dbReference>
<dbReference type="RefSeq" id="XP_054232244.1">
    <molecule id="P35813-1"/>
    <property type="nucleotide sequence ID" value="XM_054376269.1"/>
</dbReference>
<dbReference type="RefSeq" id="XP_054232245.1">
    <molecule id="P35813-1"/>
    <property type="nucleotide sequence ID" value="XM_054376270.1"/>
</dbReference>
<dbReference type="RefSeq" id="XP_054232246.1">
    <molecule id="P35813-1"/>
    <property type="nucleotide sequence ID" value="XM_054376271.1"/>
</dbReference>
<dbReference type="RefSeq" id="XP_054232247.1">
    <molecule id="P35813-1"/>
    <property type="nucleotide sequence ID" value="XM_054376272.1"/>
</dbReference>
<dbReference type="RefSeq" id="XP_054232248.1">
    <molecule id="P35813-1"/>
    <property type="nucleotide sequence ID" value="XM_054376273.1"/>
</dbReference>
<dbReference type="RefSeq" id="XP_054232249.1">
    <molecule id="P35813-1"/>
    <property type="nucleotide sequence ID" value="XM_054376274.1"/>
</dbReference>
<dbReference type="RefSeq" id="XP_054232250.1">
    <molecule id="P35813-1"/>
    <property type="nucleotide sequence ID" value="XM_054376275.1"/>
</dbReference>
<dbReference type="PDB" id="1A6Q">
    <property type="method" value="X-ray"/>
    <property type="resolution" value="2.00 A"/>
    <property type="chains" value="A=1-382"/>
</dbReference>
<dbReference type="PDB" id="3FXJ">
    <property type="method" value="X-ray"/>
    <property type="resolution" value="2.50 A"/>
    <property type="chains" value="A=1-382"/>
</dbReference>
<dbReference type="PDB" id="3FXK">
    <property type="method" value="X-ray"/>
    <property type="resolution" value="2.10 A"/>
    <property type="chains" value="A=1-382"/>
</dbReference>
<dbReference type="PDB" id="3FXL">
    <property type="method" value="X-ray"/>
    <property type="resolution" value="2.30 A"/>
    <property type="chains" value="A=1-382"/>
</dbReference>
<dbReference type="PDB" id="3FXM">
    <property type="method" value="X-ray"/>
    <property type="resolution" value="2.50 A"/>
    <property type="chains" value="A=1-382"/>
</dbReference>
<dbReference type="PDB" id="3FXO">
    <property type="method" value="X-ray"/>
    <property type="resolution" value="2.50 A"/>
    <property type="chains" value="A=1-382"/>
</dbReference>
<dbReference type="PDB" id="4RA2">
    <property type="method" value="X-ray"/>
    <property type="resolution" value="1.94 A"/>
    <property type="chains" value="A=2-368"/>
</dbReference>
<dbReference type="PDB" id="4RAF">
    <property type="method" value="X-ray"/>
    <property type="resolution" value="2.00 A"/>
    <property type="chains" value="A=2-368"/>
</dbReference>
<dbReference type="PDB" id="4RAG">
    <property type="method" value="X-ray"/>
    <property type="resolution" value="1.85 A"/>
    <property type="chains" value="A=2-368"/>
</dbReference>
<dbReference type="PDB" id="6B67">
    <property type="method" value="X-ray"/>
    <property type="resolution" value="2.20 A"/>
    <property type="chains" value="A/B/C=2-297"/>
</dbReference>
<dbReference type="PDBsum" id="1A6Q"/>
<dbReference type="PDBsum" id="3FXJ"/>
<dbReference type="PDBsum" id="3FXK"/>
<dbReference type="PDBsum" id="3FXL"/>
<dbReference type="PDBsum" id="3FXM"/>
<dbReference type="PDBsum" id="3FXO"/>
<dbReference type="PDBsum" id="4RA2"/>
<dbReference type="PDBsum" id="4RAF"/>
<dbReference type="PDBsum" id="4RAG"/>
<dbReference type="PDBsum" id="6B67"/>
<dbReference type="SMR" id="P35813"/>
<dbReference type="BioGRID" id="111489">
    <property type="interactions" value="150"/>
</dbReference>
<dbReference type="CORUM" id="P35813"/>
<dbReference type="FunCoup" id="P35813">
    <property type="interactions" value="3359"/>
</dbReference>
<dbReference type="IntAct" id="P35813">
    <property type="interactions" value="103"/>
</dbReference>
<dbReference type="MINT" id="P35813"/>
<dbReference type="STRING" id="9606.ENSP00000327255"/>
<dbReference type="BindingDB" id="P35813"/>
<dbReference type="ChEMBL" id="CHEMBL2437"/>
<dbReference type="DEPOD" id="PPM1A"/>
<dbReference type="GlyCosmos" id="P35813">
    <property type="glycosylation" value="1 site, 2 glycans"/>
</dbReference>
<dbReference type="GlyGen" id="P35813">
    <property type="glycosylation" value="2 sites, 1 N-linked glycan (1 site), 2 O-linked glycans (1 site)"/>
</dbReference>
<dbReference type="iPTMnet" id="P35813"/>
<dbReference type="MetOSite" id="P35813"/>
<dbReference type="PhosphoSitePlus" id="P35813"/>
<dbReference type="BioMuta" id="PPM1A"/>
<dbReference type="DMDM" id="548442"/>
<dbReference type="jPOST" id="P35813"/>
<dbReference type="MassIVE" id="P35813"/>
<dbReference type="PaxDb" id="9606-ENSP00000327255"/>
<dbReference type="PeptideAtlas" id="P35813"/>
<dbReference type="ProteomicsDB" id="55156">
    <molecule id="P35813-1"/>
</dbReference>
<dbReference type="ProteomicsDB" id="55157">
    <molecule id="P35813-2"/>
</dbReference>
<dbReference type="Pumba" id="P35813"/>
<dbReference type="Antibodypedia" id="11485">
    <property type="antibodies" value="463 antibodies from 38 providers"/>
</dbReference>
<dbReference type="DNASU" id="5494"/>
<dbReference type="Ensembl" id="ENST00000325642.7">
    <molecule id="P35813-3"/>
    <property type="protein sequence ID" value="ENSP00000327255.3"/>
    <property type="gene ID" value="ENSG00000100614.18"/>
</dbReference>
<dbReference type="Ensembl" id="ENST00000325658.3">
    <molecule id="P35813-2"/>
    <property type="protein sequence ID" value="ENSP00000314850.3"/>
    <property type="gene ID" value="ENSG00000100614.18"/>
</dbReference>
<dbReference type="Ensembl" id="ENST00000395076.9">
    <molecule id="P35813-1"/>
    <property type="protein sequence ID" value="ENSP00000378514.4"/>
    <property type="gene ID" value="ENSG00000100614.18"/>
</dbReference>
<dbReference type="GeneID" id="5494"/>
<dbReference type="KEGG" id="hsa:5494"/>
<dbReference type="MANE-Select" id="ENST00000395076.9">
    <property type="protein sequence ID" value="ENSP00000378514.4"/>
    <property type="RefSeq nucleotide sequence ID" value="NM_021003.5"/>
    <property type="RefSeq protein sequence ID" value="NP_066283.1"/>
</dbReference>
<dbReference type="UCSC" id="uc001xew.5">
    <molecule id="P35813-1"/>
    <property type="organism name" value="human"/>
</dbReference>
<dbReference type="AGR" id="HGNC:9275"/>
<dbReference type="CTD" id="5494"/>
<dbReference type="DisGeNET" id="5494"/>
<dbReference type="GeneCards" id="PPM1A"/>
<dbReference type="HGNC" id="HGNC:9275">
    <property type="gene designation" value="PPM1A"/>
</dbReference>
<dbReference type="HPA" id="ENSG00000100614">
    <property type="expression patterns" value="Tissue enhanced (bone)"/>
</dbReference>
<dbReference type="MIM" id="606108">
    <property type="type" value="gene"/>
</dbReference>
<dbReference type="neXtProt" id="NX_P35813"/>
<dbReference type="OpenTargets" id="ENSG00000100614"/>
<dbReference type="PharmGKB" id="PA33603"/>
<dbReference type="VEuPathDB" id="HostDB:ENSG00000100614"/>
<dbReference type="eggNOG" id="KOG0697">
    <property type="taxonomic scope" value="Eukaryota"/>
</dbReference>
<dbReference type="GeneTree" id="ENSGT00940000154832"/>
<dbReference type="HOGENOM" id="CLU_013173_4_0_1"/>
<dbReference type="InParanoid" id="P35813"/>
<dbReference type="OrthoDB" id="10264738at2759"/>
<dbReference type="PAN-GO" id="P35813">
    <property type="GO annotations" value="6 GO annotations based on evolutionary models"/>
</dbReference>
<dbReference type="PhylomeDB" id="P35813"/>
<dbReference type="TreeFam" id="TF313590"/>
<dbReference type="BRENDA" id="3.1.3.16">
    <property type="organism ID" value="2681"/>
</dbReference>
<dbReference type="PathwayCommons" id="P35813"/>
<dbReference type="Reactome" id="R-HSA-2173795">
    <property type="pathway name" value="Downregulation of SMAD2/3:SMAD4 transcriptional activity"/>
</dbReference>
<dbReference type="Reactome" id="R-HSA-380972">
    <property type="pathway name" value="Energy dependent regulation of mTOR by LKB1-AMPK"/>
</dbReference>
<dbReference type="SABIO-RK" id="P35813"/>
<dbReference type="SignaLink" id="P35813"/>
<dbReference type="SIGNOR" id="P35813"/>
<dbReference type="BioGRID-ORCS" id="5494">
    <property type="hits" value="15 hits in 1190 CRISPR screens"/>
</dbReference>
<dbReference type="ChiTaRS" id="PPM1A">
    <property type="organism name" value="human"/>
</dbReference>
<dbReference type="EvolutionaryTrace" id="P35813"/>
<dbReference type="GeneWiki" id="PPM1A"/>
<dbReference type="GenomeRNAi" id="5494"/>
<dbReference type="Pharos" id="P35813">
    <property type="development level" value="Tchem"/>
</dbReference>
<dbReference type="PRO" id="PR:P35813"/>
<dbReference type="Proteomes" id="UP000005640">
    <property type="component" value="Chromosome 14"/>
</dbReference>
<dbReference type="RNAct" id="P35813">
    <property type="molecule type" value="protein"/>
</dbReference>
<dbReference type="Bgee" id="ENSG00000100614">
    <property type="expression patterns" value="Expressed in sperm and 211 other cell types or tissues"/>
</dbReference>
<dbReference type="ExpressionAtlas" id="P35813">
    <property type="expression patterns" value="baseline and differential"/>
</dbReference>
<dbReference type="GO" id="GO:0005829">
    <property type="term" value="C:cytosol"/>
    <property type="evidence" value="ECO:0000314"/>
    <property type="project" value="HPA"/>
</dbReference>
<dbReference type="GO" id="GO:0016020">
    <property type="term" value="C:membrane"/>
    <property type="evidence" value="ECO:0000250"/>
    <property type="project" value="UniProtKB"/>
</dbReference>
<dbReference type="GO" id="GO:0005654">
    <property type="term" value="C:nucleoplasm"/>
    <property type="evidence" value="ECO:0000304"/>
    <property type="project" value="Reactome"/>
</dbReference>
<dbReference type="GO" id="GO:0005634">
    <property type="term" value="C:nucleus"/>
    <property type="evidence" value="ECO:0000314"/>
    <property type="project" value="UniProtKB"/>
</dbReference>
<dbReference type="GO" id="GO:0005886">
    <property type="term" value="C:plasma membrane"/>
    <property type="evidence" value="ECO:0000314"/>
    <property type="project" value="HPA"/>
</dbReference>
<dbReference type="GO" id="GO:0033192">
    <property type="term" value="F:calmodulin-dependent protein phosphatase activity"/>
    <property type="evidence" value="ECO:0000314"/>
    <property type="project" value="UniProtKB"/>
</dbReference>
<dbReference type="GO" id="GO:0000287">
    <property type="term" value="F:magnesium ion binding"/>
    <property type="evidence" value="ECO:0007669"/>
    <property type="project" value="InterPro"/>
</dbReference>
<dbReference type="GO" id="GO:0030145">
    <property type="term" value="F:manganese ion binding"/>
    <property type="evidence" value="ECO:0007669"/>
    <property type="project" value="InterPro"/>
</dbReference>
<dbReference type="GO" id="GO:0004722">
    <property type="term" value="F:protein serine/threonine phosphatase activity"/>
    <property type="evidence" value="ECO:0000314"/>
    <property type="project" value="UniProtKB"/>
</dbReference>
<dbReference type="GO" id="GO:0070412">
    <property type="term" value="F:R-SMAD binding"/>
    <property type="evidence" value="ECO:0000353"/>
    <property type="project" value="UniProtKB"/>
</dbReference>
<dbReference type="GO" id="GO:0071560">
    <property type="term" value="P:cellular response to transforming growth factor beta stimulus"/>
    <property type="evidence" value="ECO:0007669"/>
    <property type="project" value="Ensembl"/>
</dbReference>
<dbReference type="GO" id="GO:0016311">
    <property type="term" value="P:dephosphorylation"/>
    <property type="evidence" value="ECO:0000314"/>
    <property type="project" value="BHF-UCL"/>
</dbReference>
<dbReference type="GO" id="GO:0006499">
    <property type="term" value="P:N-terminal protein myristoylation"/>
    <property type="evidence" value="ECO:0000250"/>
    <property type="project" value="UniProtKB"/>
</dbReference>
<dbReference type="GO" id="GO:0030514">
    <property type="term" value="P:negative regulation of BMP signaling pathway"/>
    <property type="evidence" value="ECO:0007669"/>
    <property type="project" value="Ensembl"/>
</dbReference>
<dbReference type="GO" id="GO:0043124">
    <property type="term" value="P:negative regulation of canonical NF-kappaB signal transduction"/>
    <property type="evidence" value="ECO:0000315"/>
    <property type="project" value="UniProtKB"/>
</dbReference>
<dbReference type="GO" id="GO:1901223">
    <property type="term" value="P:negative regulation of non-canonical NF-kappaB signal transduction"/>
    <property type="evidence" value="ECO:0000315"/>
    <property type="project" value="UniProtKB"/>
</dbReference>
<dbReference type="GO" id="GO:0000122">
    <property type="term" value="P:negative regulation of transcription by RNA polymerase II"/>
    <property type="evidence" value="ECO:0000304"/>
    <property type="project" value="Reactome"/>
</dbReference>
<dbReference type="GO" id="GO:0030512">
    <property type="term" value="P:negative regulation of transforming growth factor beta receptor signaling pathway"/>
    <property type="evidence" value="ECO:0000314"/>
    <property type="project" value="UniProtKB"/>
</dbReference>
<dbReference type="GO" id="GO:0043123">
    <property type="term" value="P:positive regulation of canonical NF-kappaB signal transduction"/>
    <property type="evidence" value="ECO:0007001"/>
    <property type="project" value="UniProtKB"/>
</dbReference>
<dbReference type="GO" id="GO:0090263">
    <property type="term" value="P:positive regulation of canonical Wnt signaling pathway"/>
    <property type="evidence" value="ECO:0000314"/>
    <property type="project" value="BHF-UCL"/>
</dbReference>
<dbReference type="GO" id="GO:0045893">
    <property type="term" value="P:positive regulation of DNA-templated transcription"/>
    <property type="evidence" value="ECO:0000314"/>
    <property type="project" value="BHF-UCL"/>
</dbReference>
<dbReference type="GO" id="GO:0046827">
    <property type="term" value="P:positive regulation of protein export from nucleus"/>
    <property type="evidence" value="ECO:0007669"/>
    <property type="project" value="Ensembl"/>
</dbReference>
<dbReference type="GO" id="GO:0006470">
    <property type="term" value="P:protein dephosphorylation"/>
    <property type="evidence" value="ECO:0000315"/>
    <property type="project" value="UniProtKB"/>
</dbReference>
<dbReference type="GO" id="GO:0006611">
    <property type="term" value="P:protein export from nucleus"/>
    <property type="evidence" value="ECO:0007669"/>
    <property type="project" value="Ensembl"/>
</dbReference>
<dbReference type="GO" id="GO:0043122">
    <property type="term" value="P:regulation of canonical NF-kappaB signal transduction"/>
    <property type="evidence" value="ECO:0000318"/>
    <property type="project" value="GO_Central"/>
</dbReference>
<dbReference type="GO" id="GO:0051726">
    <property type="term" value="P:regulation of cell cycle"/>
    <property type="evidence" value="ECO:0000304"/>
    <property type="project" value="Reactome"/>
</dbReference>
<dbReference type="CDD" id="cd00143">
    <property type="entry name" value="PP2Cc"/>
    <property type="match status" value="1"/>
</dbReference>
<dbReference type="FunFam" id="3.60.40.10:FF:000001">
    <property type="entry name" value="protein phosphatase 1B isoform X1"/>
    <property type="match status" value="1"/>
</dbReference>
<dbReference type="FunFam" id="1.10.10.430:FF:000002">
    <property type="entry name" value="Protein phosphatase, Mg2+/Mn2+ dependent 1A"/>
    <property type="match status" value="1"/>
</dbReference>
<dbReference type="Gene3D" id="1.10.10.430">
    <property type="entry name" value="Phosphatase 2C, C-terminal domain suprefamily"/>
    <property type="match status" value="1"/>
</dbReference>
<dbReference type="Gene3D" id="3.60.40.10">
    <property type="entry name" value="PPM-type phosphatase domain"/>
    <property type="match status" value="1"/>
</dbReference>
<dbReference type="InterPro" id="IPR015655">
    <property type="entry name" value="PP2C"/>
</dbReference>
<dbReference type="InterPro" id="IPR000222">
    <property type="entry name" value="PP2C_BS"/>
</dbReference>
<dbReference type="InterPro" id="IPR012911">
    <property type="entry name" value="PP2C_C"/>
</dbReference>
<dbReference type="InterPro" id="IPR036580">
    <property type="entry name" value="PP2C_C_sf"/>
</dbReference>
<dbReference type="InterPro" id="IPR036457">
    <property type="entry name" value="PPM-type-like_dom_sf"/>
</dbReference>
<dbReference type="InterPro" id="IPR001932">
    <property type="entry name" value="PPM-type_phosphatase-like_dom"/>
</dbReference>
<dbReference type="PANTHER" id="PTHR47992">
    <property type="entry name" value="PROTEIN PHOSPHATASE"/>
    <property type="match status" value="1"/>
</dbReference>
<dbReference type="Pfam" id="PF00481">
    <property type="entry name" value="PP2C"/>
    <property type="match status" value="1"/>
</dbReference>
<dbReference type="Pfam" id="PF07830">
    <property type="entry name" value="PP2C_C"/>
    <property type="match status" value="1"/>
</dbReference>
<dbReference type="SMART" id="SM00332">
    <property type="entry name" value="PP2Cc"/>
    <property type="match status" value="1"/>
</dbReference>
<dbReference type="SUPFAM" id="SSF81606">
    <property type="entry name" value="PP2C-like"/>
    <property type="match status" value="1"/>
</dbReference>
<dbReference type="SUPFAM" id="SSF81601">
    <property type="entry name" value="Protein serine/threonine phosphatase 2C, C-terminal domain"/>
    <property type="match status" value="1"/>
</dbReference>
<dbReference type="PROSITE" id="PS01032">
    <property type="entry name" value="PPM_1"/>
    <property type="match status" value="1"/>
</dbReference>
<dbReference type="PROSITE" id="PS51746">
    <property type="entry name" value="PPM_2"/>
    <property type="match status" value="1"/>
</dbReference>
<sequence>MGAFLDKPKMEKHNAQGQGNGLRYGLSSMQGWRVEMEDAHTAVIGLPSGLESWSFFAVYDGHAGSQVAKYCCEHLLDHITNNQDFKGSAGAPSVENVKNGIRTGFLEIDEHMRVMSEKKHGADRSGSTAVGVLISPQHTYFINCGDSRGLLCRNRKVHFFTQDHKPSNPLEKERIQNAGGSVMIQRVNGSLAVSRALGDFDYKCVHGKGPTEQLVSPEPEVHDIERSEEDDQFIILACDGIWDVMGNEELCDFVRSRLEVTDDLEKVCNEVVDTCLYKGSRDNMSVILICFPNAPKVSPEAVKKEAELDKYLECRVEEIIKKQGEGVPDLVHVMRTLASENIPSLPPGGELASKRNVIEAVYNRLNPYKNDDTDSTSTDDMW</sequence>
<keyword id="KW-0002">3D-structure</keyword>
<keyword id="KW-0025">Alternative splicing</keyword>
<keyword id="KW-0963">Cytoplasm</keyword>
<keyword id="KW-0378">Hydrolase</keyword>
<keyword id="KW-0449">Lipoprotein</keyword>
<keyword id="KW-0460">Magnesium</keyword>
<keyword id="KW-0464">Manganese</keyword>
<keyword id="KW-0472">Membrane</keyword>
<keyword id="KW-0479">Metal-binding</keyword>
<keyword id="KW-0519">Myristate</keyword>
<keyword id="KW-0539">Nucleus</keyword>
<keyword id="KW-0597">Phosphoprotein</keyword>
<keyword id="KW-0904">Protein phosphatase</keyword>
<keyword id="KW-1267">Proteomics identification</keyword>
<keyword id="KW-1185">Reference proteome</keyword>
<feature type="initiator methionine" description="Removed" evidence="8">
    <location>
        <position position="1"/>
    </location>
</feature>
<feature type="chain" id="PRO_0000057741" description="Protein phosphatase 1A">
    <location>
        <begin position="2"/>
        <end position="382"/>
    </location>
</feature>
<feature type="domain" description="PPM-type phosphatase" evidence="3">
    <location>
        <begin position="23"/>
        <end position="291"/>
    </location>
</feature>
<feature type="binding site" evidence="10 14">
    <location>
        <position position="60"/>
    </location>
    <ligand>
        <name>Mn(2+)</name>
        <dbReference type="ChEBI" id="CHEBI:29035"/>
        <label>1</label>
    </ligand>
</feature>
<feature type="binding site" evidence="10 14">
    <location>
        <position position="60"/>
    </location>
    <ligand>
        <name>Mn(2+)</name>
        <dbReference type="ChEBI" id="CHEBI:29035"/>
        <label>2</label>
    </ligand>
</feature>
<feature type="binding site" evidence="10 14">
    <location>
        <position position="61"/>
    </location>
    <ligand>
        <name>Mn(2+)</name>
        <dbReference type="ChEBI" id="CHEBI:29035"/>
        <label>1</label>
    </ligand>
</feature>
<feature type="binding site" evidence="10 14">
    <location>
        <position position="239"/>
    </location>
    <ligand>
        <name>Mn(2+)</name>
        <dbReference type="ChEBI" id="CHEBI:29035"/>
        <label>2</label>
    </ligand>
</feature>
<feature type="binding site" evidence="10 14">
    <location>
        <position position="282"/>
    </location>
    <ligand>
        <name>Mn(2+)</name>
        <dbReference type="ChEBI" id="CHEBI:29035"/>
        <label>2</label>
    </ligand>
</feature>
<feature type="modified residue" description="Phosphoserine" evidence="15">
    <location>
        <position position="375"/>
    </location>
</feature>
<feature type="modified residue" description="Phosphoserine" evidence="2">
    <location>
        <position position="377"/>
    </location>
</feature>
<feature type="lipid moiety-binding region" description="N-myristoyl glycine" evidence="6 8">
    <location>
        <position position="2"/>
    </location>
</feature>
<feature type="splice variant" id="VSP_045687" description="In isoform 3." evidence="11">
    <original>M</original>
    <variation>MFCSGRKWVAEATICTKLMKREKRRMGKRRAKKAKREEKKKGGERRRNEKRGNQMKRMCERKKYETDLEDQDIM</variation>
    <location>
        <position position="1"/>
    </location>
</feature>
<feature type="splice variant" id="VSP_005085" description="In isoform Alpha-2." evidence="12">
    <original>EIIKKQG</original>
    <variation>GGSFNKK</variation>
    <location>
        <begin position="318"/>
        <end position="324"/>
    </location>
</feature>
<feature type="splice variant" id="VSP_005086" description="In isoform Alpha-2." evidence="12">
    <location>
        <begin position="325"/>
        <end position="382"/>
    </location>
</feature>
<feature type="mutagenesis site" description="No effect on binding SMAD2." evidence="4">
    <original>D</original>
    <variation>N</variation>
    <location>
        <position position="239"/>
    </location>
</feature>
<feature type="sequence conflict" description="In Ref. 3; AK097843." evidence="13" ref="3">
    <original>I</original>
    <variation>T</variation>
    <location>
        <position position="342"/>
    </location>
</feature>
<feature type="strand" evidence="17">
    <location>
        <begin position="4"/>
        <end position="9"/>
    </location>
</feature>
<feature type="strand" evidence="17">
    <location>
        <begin position="13"/>
        <end position="19"/>
    </location>
</feature>
<feature type="strand" evidence="17">
    <location>
        <begin position="22"/>
        <end position="29"/>
    </location>
</feature>
<feature type="strand" evidence="17">
    <location>
        <begin position="31"/>
        <end position="35"/>
    </location>
</feature>
<feature type="strand" evidence="17">
    <location>
        <begin position="38"/>
        <end position="45"/>
    </location>
</feature>
<feature type="turn" evidence="16">
    <location>
        <begin position="47"/>
        <end position="49"/>
    </location>
</feature>
<feature type="strand" evidence="17">
    <location>
        <begin position="54"/>
        <end position="63"/>
    </location>
</feature>
<feature type="helix" evidence="17">
    <location>
        <begin position="66"/>
        <end position="80"/>
    </location>
</feature>
<feature type="helix" evidence="17">
    <location>
        <begin position="83"/>
        <end position="86"/>
    </location>
</feature>
<feature type="strand" evidence="17">
    <location>
        <begin position="88"/>
        <end position="91"/>
    </location>
</feature>
<feature type="helix" evidence="17">
    <location>
        <begin position="94"/>
        <end position="119"/>
    </location>
</feature>
<feature type="strand" evidence="17">
    <location>
        <begin position="129"/>
        <end position="134"/>
    </location>
</feature>
<feature type="strand" evidence="17">
    <location>
        <begin position="136"/>
        <end position="146"/>
    </location>
</feature>
<feature type="strand" evidence="17">
    <location>
        <begin position="148"/>
        <end position="153"/>
    </location>
</feature>
<feature type="strand" evidence="17">
    <location>
        <begin position="156"/>
        <end position="160"/>
    </location>
</feature>
<feature type="helix" evidence="17">
    <location>
        <begin position="169"/>
        <end position="177"/>
    </location>
</feature>
<feature type="turn" evidence="17">
    <location>
        <begin position="188"/>
        <end position="190"/>
    </location>
</feature>
<feature type="helix" evidence="17">
    <location>
        <begin position="200"/>
        <end position="202"/>
    </location>
</feature>
<feature type="strand" evidence="17">
    <location>
        <begin position="212"/>
        <end position="216"/>
    </location>
</feature>
<feature type="strand" evidence="17">
    <location>
        <begin position="220"/>
        <end position="225"/>
    </location>
</feature>
<feature type="turn" evidence="17">
    <location>
        <begin position="228"/>
        <end position="230"/>
    </location>
</feature>
<feature type="strand" evidence="17">
    <location>
        <begin position="231"/>
        <end position="237"/>
    </location>
</feature>
<feature type="helix" evidence="17">
    <location>
        <begin position="239"/>
        <end position="242"/>
    </location>
</feature>
<feature type="helix" evidence="17">
    <location>
        <begin position="247"/>
        <end position="258"/>
    </location>
</feature>
<feature type="helix" evidence="17">
    <location>
        <begin position="264"/>
        <end position="277"/>
    </location>
</feature>
<feature type="strand" evidence="17">
    <location>
        <begin position="284"/>
        <end position="290"/>
    </location>
</feature>
<feature type="helix" evidence="17">
    <location>
        <begin position="299"/>
        <end position="320"/>
    </location>
</feature>
<feature type="helix" evidence="17">
    <location>
        <begin position="330"/>
        <end position="339"/>
    </location>
</feature>
<feature type="turn" evidence="17">
    <location>
        <begin position="347"/>
        <end position="350"/>
    </location>
</feature>
<feature type="helix" evidence="17">
    <location>
        <begin position="351"/>
        <end position="354"/>
    </location>
</feature>
<feature type="helix" evidence="17">
    <location>
        <begin position="355"/>
        <end position="365"/>
    </location>
</feature>
<feature type="sequence conflict" description="In Ref. 3; AK097843." evidence="13" ref="3">
    <original>Q</original>
    <variation>R</variation>
    <location sequence="P35813-3">
        <position position="54"/>
    </location>
</feature>
<accession>P35813</accession>
<accession>B5BU11</accession>
<accession>J3KNM0</accession>
<accession>O75551</accession>
<protein>
    <recommendedName>
        <fullName>Protein phosphatase 1A</fullName>
        <ecNumber evidence="3 9">3.1.3.16</ecNumber>
    </recommendedName>
    <alternativeName>
        <fullName>Protein phosphatase 2C isoform alpha</fullName>
        <shortName>PP2C-alpha</shortName>
    </alternativeName>
    <alternativeName>
        <fullName>Protein phosphatase IA</fullName>
    </alternativeName>
</protein>